<gene>
    <name evidence="1" type="primary">zapB</name>
    <name type="ordered locus">PM1483</name>
</gene>
<reference key="1">
    <citation type="journal article" date="2001" name="Proc. Natl. Acad. Sci. U.S.A.">
        <title>Complete genomic sequence of Pasteurella multocida Pm70.</title>
        <authorList>
            <person name="May B.J."/>
            <person name="Zhang Q."/>
            <person name="Li L.L."/>
            <person name="Paustian M.L."/>
            <person name="Whittam T.S."/>
            <person name="Kapur V."/>
        </authorList>
    </citation>
    <scope>NUCLEOTIDE SEQUENCE [LARGE SCALE GENOMIC DNA]</scope>
    <source>
        <strain>Pm70</strain>
    </source>
</reference>
<dbReference type="EMBL" id="AE004439">
    <property type="protein sequence ID" value="AAK03567.1"/>
    <property type="molecule type" value="Genomic_DNA"/>
</dbReference>
<dbReference type="RefSeq" id="WP_005718043.1">
    <property type="nucleotide sequence ID" value="NC_002663.1"/>
</dbReference>
<dbReference type="SMR" id="Q9CKW8"/>
<dbReference type="STRING" id="272843.PM1483"/>
<dbReference type="EnsemblBacteria" id="AAK03567">
    <property type="protein sequence ID" value="AAK03567"/>
    <property type="gene ID" value="PM1483"/>
</dbReference>
<dbReference type="GeneID" id="77206957"/>
<dbReference type="KEGG" id="pmu:PM1483"/>
<dbReference type="HOGENOM" id="CLU_171174_2_0_6"/>
<dbReference type="OrthoDB" id="6554593at2"/>
<dbReference type="Proteomes" id="UP000000809">
    <property type="component" value="Chromosome"/>
</dbReference>
<dbReference type="GO" id="GO:0005737">
    <property type="term" value="C:cytoplasm"/>
    <property type="evidence" value="ECO:0007669"/>
    <property type="project" value="UniProtKB-SubCell"/>
</dbReference>
<dbReference type="GO" id="GO:0000917">
    <property type="term" value="P:division septum assembly"/>
    <property type="evidence" value="ECO:0007669"/>
    <property type="project" value="UniProtKB-KW"/>
</dbReference>
<dbReference type="GO" id="GO:0043093">
    <property type="term" value="P:FtsZ-dependent cytokinesis"/>
    <property type="evidence" value="ECO:0007669"/>
    <property type="project" value="UniProtKB-UniRule"/>
</dbReference>
<dbReference type="Gene3D" id="1.20.5.340">
    <property type="match status" value="1"/>
</dbReference>
<dbReference type="HAMAP" id="MF_01196">
    <property type="entry name" value="ZapB"/>
    <property type="match status" value="1"/>
</dbReference>
<dbReference type="InterPro" id="IPR009252">
    <property type="entry name" value="Cell_div_ZapB"/>
</dbReference>
<dbReference type="Pfam" id="PF06005">
    <property type="entry name" value="ZapB"/>
    <property type="match status" value="1"/>
</dbReference>
<keyword id="KW-0131">Cell cycle</keyword>
<keyword id="KW-0132">Cell division</keyword>
<keyword id="KW-0175">Coiled coil</keyword>
<keyword id="KW-0963">Cytoplasm</keyword>
<keyword id="KW-1185">Reference proteome</keyword>
<keyword id="KW-0717">Septation</keyword>
<evidence type="ECO:0000255" key="1">
    <source>
        <dbReference type="HAMAP-Rule" id="MF_01196"/>
    </source>
</evidence>
<evidence type="ECO:0000256" key="2">
    <source>
        <dbReference type="SAM" id="MobiDB-lite"/>
    </source>
</evidence>
<feature type="chain" id="PRO_0000333910" description="Cell division protein ZapB">
    <location>
        <begin position="1"/>
        <end position="72"/>
    </location>
</feature>
<feature type="region of interest" description="Disordered" evidence="2">
    <location>
        <begin position="33"/>
        <end position="57"/>
    </location>
</feature>
<feature type="coiled-coil region" evidence="1">
    <location>
        <begin position="1"/>
        <end position="72"/>
    </location>
</feature>
<feature type="compositionally biased region" description="Basic and acidic residues" evidence="2">
    <location>
        <begin position="44"/>
        <end position="57"/>
    </location>
</feature>
<organism>
    <name type="scientific">Pasteurella multocida (strain Pm70)</name>
    <dbReference type="NCBI Taxonomy" id="272843"/>
    <lineage>
        <taxon>Bacteria</taxon>
        <taxon>Pseudomonadati</taxon>
        <taxon>Pseudomonadota</taxon>
        <taxon>Gammaproteobacteria</taxon>
        <taxon>Pasteurellales</taxon>
        <taxon>Pasteurellaceae</taxon>
        <taxon>Pasteurella</taxon>
    </lineage>
</organism>
<sequence length="72" mass="8485">MSLEILDQLEEKIKQAVETIQLLQLEIDELKEKNNQSQQANDALRSENEQLKSEHQNWQERLRSLLGKIDNV</sequence>
<protein>
    <recommendedName>
        <fullName evidence="1">Cell division protein ZapB</fullName>
    </recommendedName>
</protein>
<name>ZAPB_PASMU</name>
<proteinExistence type="inferred from homology"/>
<accession>Q9CKW8</accession>
<comment type="function">
    <text evidence="1">Non-essential, abundant cell division factor that is required for proper Z-ring formation. It is recruited early to the divisome by direct interaction with FtsZ, stimulating Z-ring assembly and thereby promoting cell division earlier in the cell cycle. Its recruitment to the Z-ring requires functional FtsA or ZipA.</text>
</comment>
<comment type="subunit">
    <text evidence="1">Homodimer. The ends of the coiled-coil dimer bind to each other, forming polymers. Interacts with FtsZ.</text>
</comment>
<comment type="subcellular location">
    <subcellularLocation>
        <location>Cytoplasm</location>
    </subcellularLocation>
    <text evidence="1">Localizes to the septum at mid-cell, in a FtsZ-like pattern.</text>
</comment>
<comment type="similarity">
    <text evidence="1">Belongs to the ZapB family.</text>
</comment>